<protein>
    <recommendedName>
        <fullName evidence="1">Periplasmic trehalase</fullName>
        <ecNumber evidence="1">3.2.1.28</ecNumber>
    </recommendedName>
    <alternativeName>
        <fullName evidence="1">Alpha,alpha-trehalase</fullName>
    </alternativeName>
    <alternativeName>
        <fullName evidence="1">Alpha,alpha-trehalose glucohydrolase</fullName>
    </alternativeName>
</protein>
<name>TREA_ECOBW</name>
<reference key="1">
    <citation type="journal article" date="2009" name="J. Bacteriol.">
        <title>Genomic sequencing reveals regulatory mutations and recombinational events in the widely used MC4100 lineage of Escherichia coli K-12.</title>
        <authorList>
            <person name="Ferenci T."/>
            <person name="Zhou Z."/>
            <person name="Betteridge T."/>
            <person name="Ren Y."/>
            <person name="Liu Y."/>
            <person name="Feng L."/>
            <person name="Reeves P.R."/>
            <person name="Wang L."/>
        </authorList>
    </citation>
    <scope>NUCLEOTIDE SEQUENCE [LARGE SCALE GENOMIC DNA]</scope>
    <source>
        <strain>K12 / MC4100 / BW2952</strain>
    </source>
</reference>
<keyword id="KW-0326">Glycosidase</keyword>
<keyword id="KW-0378">Hydrolase</keyword>
<keyword id="KW-0574">Periplasm</keyword>
<keyword id="KW-0732">Signal</keyword>
<comment type="function">
    <text evidence="1">Provides the cells with the ability to utilize trehalose at high osmolarity by splitting it into glucose molecules that can subsequently be taken up by the phosphotransferase-mediated uptake system.</text>
</comment>
<comment type="catalytic activity">
    <reaction evidence="1">
        <text>alpha,alpha-trehalose + H2O = alpha-D-glucose + beta-D-glucose</text>
        <dbReference type="Rhea" id="RHEA:32675"/>
        <dbReference type="ChEBI" id="CHEBI:15377"/>
        <dbReference type="ChEBI" id="CHEBI:15903"/>
        <dbReference type="ChEBI" id="CHEBI:16551"/>
        <dbReference type="ChEBI" id="CHEBI:17925"/>
        <dbReference type="EC" id="3.2.1.28"/>
    </reaction>
</comment>
<comment type="subunit">
    <text evidence="1">Monomer.</text>
</comment>
<comment type="subcellular location">
    <subcellularLocation>
        <location evidence="1">Periplasm</location>
    </subcellularLocation>
</comment>
<comment type="similarity">
    <text evidence="1">Belongs to the glycosyl hydrolase 37 family.</text>
</comment>
<gene>
    <name evidence="1" type="primary">treA</name>
    <name type="ordered locus">BWG_1022</name>
</gene>
<proteinExistence type="inferred from homology"/>
<accession>C4ZTN8</accession>
<evidence type="ECO:0000255" key="1">
    <source>
        <dbReference type="HAMAP-Rule" id="MF_01060"/>
    </source>
</evidence>
<evidence type="ECO:0000256" key="2">
    <source>
        <dbReference type="SAM" id="MobiDB-lite"/>
    </source>
</evidence>
<feature type="signal peptide" evidence="1">
    <location>
        <begin position="1"/>
        <end position="30"/>
    </location>
</feature>
<feature type="chain" id="PRO_1000213447" description="Periplasmic trehalase">
    <location>
        <begin position="31"/>
        <end position="565"/>
    </location>
</feature>
<feature type="region of interest" description="Disordered" evidence="2">
    <location>
        <begin position="538"/>
        <end position="565"/>
    </location>
</feature>
<feature type="compositionally biased region" description="Polar residues" evidence="2">
    <location>
        <begin position="548"/>
        <end position="565"/>
    </location>
</feature>
<feature type="active site" description="Proton donor/acceptor" evidence="1">
    <location>
        <position position="312"/>
    </location>
</feature>
<feature type="active site" description="Proton donor/acceptor" evidence="1">
    <location>
        <position position="496"/>
    </location>
</feature>
<feature type="binding site" evidence="1">
    <location>
        <position position="152"/>
    </location>
    <ligand>
        <name>substrate</name>
    </ligand>
</feature>
<feature type="binding site" evidence="1">
    <location>
        <begin position="159"/>
        <end position="160"/>
    </location>
    <ligand>
        <name>substrate</name>
    </ligand>
</feature>
<feature type="binding site" evidence="1">
    <location>
        <position position="196"/>
    </location>
    <ligand>
        <name>substrate</name>
    </ligand>
</feature>
<feature type="binding site" evidence="1">
    <location>
        <begin position="205"/>
        <end position="207"/>
    </location>
    <ligand>
        <name>substrate</name>
    </ligand>
</feature>
<feature type="binding site" evidence="1">
    <location>
        <begin position="277"/>
        <end position="279"/>
    </location>
    <ligand>
        <name>substrate</name>
    </ligand>
</feature>
<feature type="binding site" evidence="1">
    <location>
        <position position="310"/>
    </location>
    <ligand>
        <name>substrate</name>
    </ligand>
</feature>
<feature type="binding site" evidence="1">
    <location>
        <position position="511"/>
    </location>
    <ligand>
        <name>substrate</name>
    </ligand>
</feature>
<organism>
    <name type="scientific">Escherichia coli (strain K12 / MC4100 / BW2952)</name>
    <dbReference type="NCBI Taxonomy" id="595496"/>
    <lineage>
        <taxon>Bacteria</taxon>
        <taxon>Pseudomonadati</taxon>
        <taxon>Pseudomonadota</taxon>
        <taxon>Gammaproteobacteria</taxon>
        <taxon>Enterobacterales</taxon>
        <taxon>Enterobacteriaceae</taxon>
        <taxon>Escherichia</taxon>
    </lineage>
</organism>
<dbReference type="EC" id="3.2.1.28" evidence="1"/>
<dbReference type="EMBL" id="CP001396">
    <property type="protein sequence ID" value="ACR64010.1"/>
    <property type="molecule type" value="Genomic_DNA"/>
</dbReference>
<dbReference type="RefSeq" id="WP_000841714.1">
    <property type="nucleotide sequence ID" value="NC_012759.1"/>
</dbReference>
<dbReference type="SMR" id="C4ZTN8"/>
<dbReference type="CAZy" id="GH37">
    <property type="family name" value="Glycoside Hydrolase Family 37"/>
</dbReference>
<dbReference type="KEGG" id="ebw:BWG_1022"/>
<dbReference type="HOGENOM" id="CLU_006451_3_1_6"/>
<dbReference type="GO" id="GO:0042597">
    <property type="term" value="C:periplasmic space"/>
    <property type="evidence" value="ECO:0007669"/>
    <property type="project" value="UniProtKB-SubCell"/>
</dbReference>
<dbReference type="GO" id="GO:0004555">
    <property type="term" value="F:alpha,alpha-trehalase activity"/>
    <property type="evidence" value="ECO:0007669"/>
    <property type="project" value="UniProtKB-UniRule"/>
</dbReference>
<dbReference type="GO" id="GO:0071474">
    <property type="term" value="P:cellular hyperosmotic response"/>
    <property type="evidence" value="ECO:0007669"/>
    <property type="project" value="InterPro"/>
</dbReference>
<dbReference type="GO" id="GO:0005993">
    <property type="term" value="P:trehalose catabolic process"/>
    <property type="evidence" value="ECO:0007669"/>
    <property type="project" value="InterPro"/>
</dbReference>
<dbReference type="FunFam" id="1.50.10.10:FF:000003">
    <property type="entry name" value="Cytoplasmic trehalase"/>
    <property type="match status" value="1"/>
</dbReference>
<dbReference type="Gene3D" id="1.50.10.10">
    <property type="match status" value="1"/>
</dbReference>
<dbReference type="HAMAP" id="MF_01060">
    <property type="entry name" value="Peripl_trehalase"/>
    <property type="match status" value="1"/>
</dbReference>
<dbReference type="InterPro" id="IPR008928">
    <property type="entry name" value="6-hairpin_glycosidase_sf"/>
</dbReference>
<dbReference type="InterPro" id="IPR012341">
    <property type="entry name" value="6hp_glycosidase-like_sf"/>
</dbReference>
<dbReference type="InterPro" id="IPR001661">
    <property type="entry name" value="Glyco_hydro_37"/>
</dbReference>
<dbReference type="InterPro" id="IPR018232">
    <property type="entry name" value="Glyco_hydro_37_CS"/>
</dbReference>
<dbReference type="InterPro" id="IPR023720">
    <property type="entry name" value="Trehalase_periplasmic"/>
</dbReference>
<dbReference type="NCBIfam" id="NF009773">
    <property type="entry name" value="PRK13270.1"/>
    <property type="match status" value="1"/>
</dbReference>
<dbReference type="NCBIfam" id="NF009774">
    <property type="entry name" value="PRK13271.1"/>
    <property type="match status" value="1"/>
</dbReference>
<dbReference type="PANTHER" id="PTHR23403">
    <property type="entry name" value="TREHALASE"/>
    <property type="match status" value="1"/>
</dbReference>
<dbReference type="PANTHER" id="PTHR23403:SF1">
    <property type="entry name" value="TREHALASE"/>
    <property type="match status" value="1"/>
</dbReference>
<dbReference type="Pfam" id="PF01204">
    <property type="entry name" value="Trehalase"/>
    <property type="match status" value="1"/>
</dbReference>
<dbReference type="PRINTS" id="PR00744">
    <property type="entry name" value="GLHYDRLASE37"/>
</dbReference>
<dbReference type="SUPFAM" id="SSF48208">
    <property type="entry name" value="Six-hairpin glycosidases"/>
    <property type="match status" value="1"/>
</dbReference>
<dbReference type="PROSITE" id="PS00927">
    <property type="entry name" value="TREHALASE_1"/>
    <property type="match status" value="1"/>
</dbReference>
<dbReference type="PROSITE" id="PS00928">
    <property type="entry name" value="TREHALASE_2"/>
    <property type="match status" value="1"/>
</dbReference>
<sequence>MKSPAPSRPQKMALIPACIFLCFAALSVQAEETPVTPQPPDILLGPLFNDVQNAKLFPDQKTFADAVPNSDPLMILADYRMQQNQSGFDLRHFVNVNFTLPKEGEKYVPPEGQSLREHIDGLWPVLTRSTENTEKWDSLLPLPEPYVVPGGRFREVYYWDSYFTMLGLAESGHWDKVADMVANFAHEIDTYGHIPNGNRSYYLSRSQPPFFALMVELLAQHEGDAALKQYLPQMQKEYAYWMDGVENLQAGQQEKRVVKLQDGTLLNRYWDDRDTPRPESWVEDIATAKSNPNRPATEIYRDLRSAAASGWDFSSRWMDNPQQLNTLRTTSIVPVDLNSLMFKMEKILARASKAAGDNAMANQYETLANARQKGIEKYLWNDQQGWYADYDLKSHKVRNQLTAAALFPLYVNAAAKDRANKMATATKTHLLQPGGLNTTSVKSGQQWDAPNGWAPLQWVATEGLQNYGQKEVAMDISWHFLTNVQHTYDREKKLVEKYDVSTTGTGGGGGEYPLQDGFGWTNGVTLKMLDLICPKEQPCDNVPATRPTVKSATTQPSTKEAQPTP</sequence>